<gene>
    <name evidence="1" type="primary">rplB</name>
    <name type="ordered locus">BAD_0324</name>
</gene>
<comment type="function">
    <text evidence="1">One of the primary rRNA binding proteins. Required for association of the 30S and 50S subunits to form the 70S ribosome, for tRNA binding and peptide bond formation. It has been suggested to have peptidyltransferase activity; this is somewhat controversial. Makes several contacts with the 16S rRNA in the 70S ribosome.</text>
</comment>
<comment type="subunit">
    <text evidence="1">Part of the 50S ribosomal subunit. Forms a bridge to the 30S subunit in the 70S ribosome.</text>
</comment>
<comment type="similarity">
    <text evidence="1">Belongs to the universal ribosomal protein uL2 family.</text>
</comment>
<protein>
    <recommendedName>
        <fullName evidence="1">Large ribosomal subunit protein uL2</fullName>
    </recommendedName>
    <alternativeName>
        <fullName evidence="3">50S ribosomal protein L2</fullName>
    </alternativeName>
</protein>
<keyword id="KW-1185">Reference proteome</keyword>
<keyword id="KW-0687">Ribonucleoprotein</keyword>
<keyword id="KW-0689">Ribosomal protein</keyword>
<keyword id="KW-0694">RNA-binding</keyword>
<keyword id="KW-0699">rRNA-binding</keyword>
<organism>
    <name type="scientific">Bifidobacterium adolescentis (strain ATCC 15703 / DSM 20083 / NCTC 11814 / E194a)</name>
    <dbReference type="NCBI Taxonomy" id="367928"/>
    <lineage>
        <taxon>Bacteria</taxon>
        <taxon>Bacillati</taxon>
        <taxon>Actinomycetota</taxon>
        <taxon>Actinomycetes</taxon>
        <taxon>Bifidobacteriales</taxon>
        <taxon>Bifidobacteriaceae</taxon>
        <taxon>Bifidobacterium</taxon>
    </lineage>
</organism>
<proteinExistence type="inferred from homology"/>
<evidence type="ECO:0000255" key="1">
    <source>
        <dbReference type="HAMAP-Rule" id="MF_01320"/>
    </source>
</evidence>
<evidence type="ECO:0000256" key="2">
    <source>
        <dbReference type="SAM" id="MobiDB-lite"/>
    </source>
</evidence>
<evidence type="ECO:0000305" key="3"/>
<name>RL2_BIFAA</name>
<dbReference type="EMBL" id="AP009256">
    <property type="protein sequence ID" value="BAF39105.1"/>
    <property type="molecule type" value="Genomic_DNA"/>
</dbReference>
<dbReference type="RefSeq" id="WP_003808023.1">
    <property type="nucleotide sequence ID" value="NZ_CAXVNC010000001.1"/>
</dbReference>
<dbReference type="SMR" id="A1A072"/>
<dbReference type="STRING" id="367928.BAD_0324"/>
<dbReference type="PaxDb" id="1680-BADO_0331"/>
<dbReference type="GeneID" id="4556671"/>
<dbReference type="KEGG" id="bad:BAD_0324"/>
<dbReference type="HOGENOM" id="CLU_036235_2_1_11"/>
<dbReference type="Proteomes" id="UP000008702">
    <property type="component" value="Chromosome"/>
</dbReference>
<dbReference type="GO" id="GO:0015934">
    <property type="term" value="C:large ribosomal subunit"/>
    <property type="evidence" value="ECO:0007669"/>
    <property type="project" value="InterPro"/>
</dbReference>
<dbReference type="GO" id="GO:0019843">
    <property type="term" value="F:rRNA binding"/>
    <property type="evidence" value="ECO:0007669"/>
    <property type="project" value="UniProtKB-UniRule"/>
</dbReference>
<dbReference type="GO" id="GO:0003735">
    <property type="term" value="F:structural constituent of ribosome"/>
    <property type="evidence" value="ECO:0007669"/>
    <property type="project" value="InterPro"/>
</dbReference>
<dbReference type="GO" id="GO:0016740">
    <property type="term" value="F:transferase activity"/>
    <property type="evidence" value="ECO:0007669"/>
    <property type="project" value="InterPro"/>
</dbReference>
<dbReference type="GO" id="GO:0002181">
    <property type="term" value="P:cytoplasmic translation"/>
    <property type="evidence" value="ECO:0007669"/>
    <property type="project" value="TreeGrafter"/>
</dbReference>
<dbReference type="FunFam" id="2.30.30.30:FF:000001">
    <property type="entry name" value="50S ribosomal protein L2"/>
    <property type="match status" value="1"/>
</dbReference>
<dbReference type="FunFam" id="2.40.50.140:FF:000003">
    <property type="entry name" value="50S ribosomal protein L2"/>
    <property type="match status" value="1"/>
</dbReference>
<dbReference type="FunFam" id="4.10.950.10:FF:000001">
    <property type="entry name" value="50S ribosomal protein L2"/>
    <property type="match status" value="1"/>
</dbReference>
<dbReference type="Gene3D" id="2.30.30.30">
    <property type="match status" value="1"/>
</dbReference>
<dbReference type="Gene3D" id="2.40.50.140">
    <property type="entry name" value="Nucleic acid-binding proteins"/>
    <property type="match status" value="1"/>
</dbReference>
<dbReference type="Gene3D" id="4.10.950.10">
    <property type="entry name" value="Ribosomal protein L2, domain 3"/>
    <property type="match status" value="1"/>
</dbReference>
<dbReference type="HAMAP" id="MF_01320_B">
    <property type="entry name" value="Ribosomal_uL2_B"/>
    <property type="match status" value="1"/>
</dbReference>
<dbReference type="InterPro" id="IPR012340">
    <property type="entry name" value="NA-bd_OB-fold"/>
</dbReference>
<dbReference type="InterPro" id="IPR014722">
    <property type="entry name" value="Rib_uL2_dom2"/>
</dbReference>
<dbReference type="InterPro" id="IPR002171">
    <property type="entry name" value="Ribosomal_uL2"/>
</dbReference>
<dbReference type="InterPro" id="IPR005880">
    <property type="entry name" value="Ribosomal_uL2_bac/org-type"/>
</dbReference>
<dbReference type="InterPro" id="IPR022669">
    <property type="entry name" value="Ribosomal_uL2_C"/>
</dbReference>
<dbReference type="InterPro" id="IPR014726">
    <property type="entry name" value="Ribosomal_uL2_dom3"/>
</dbReference>
<dbReference type="InterPro" id="IPR022666">
    <property type="entry name" value="Ribosomal_uL2_RNA-bd_dom"/>
</dbReference>
<dbReference type="InterPro" id="IPR008991">
    <property type="entry name" value="Translation_prot_SH3-like_sf"/>
</dbReference>
<dbReference type="NCBIfam" id="TIGR01171">
    <property type="entry name" value="rplB_bact"/>
    <property type="match status" value="1"/>
</dbReference>
<dbReference type="PANTHER" id="PTHR13691:SF5">
    <property type="entry name" value="LARGE RIBOSOMAL SUBUNIT PROTEIN UL2M"/>
    <property type="match status" value="1"/>
</dbReference>
<dbReference type="PANTHER" id="PTHR13691">
    <property type="entry name" value="RIBOSOMAL PROTEIN L2"/>
    <property type="match status" value="1"/>
</dbReference>
<dbReference type="Pfam" id="PF00181">
    <property type="entry name" value="Ribosomal_L2"/>
    <property type="match status" value="1"/>
</dbReference>
<dbReference type="Pfam" id="PF03947">
    <property type="entry name" value="Ribosomal_L2_C"/>
    <property type="match status" value="1"/>
</dbReference>
<dbReference type="PIRSF" id="PIRSF002158">
    <property type="entry name" value="Ribosomal_L2"/>
    <property type="match status" value="1"/>
</dbReference>
<dbReference type="SMART" id="SM01383">
    <property type="entry name" value="Ribosomal_L2"/>
    <property type="match status" value="1"/>
</dbReference>
<dbReference type="SMART" id="SM01382">
    <property type="entry name" value="Ribosomal_L2_C"/>
    <property type="match status" value="1"/>
</dbReference>
<dbReference type="SUPFAM" id="SSF50249">
    <property type="entry name" value="Nucleic acid-binding proteins"/>
    <property type="match status" value="1"/>
</dbReference>
<dbReference type="SUPFAM" id="SSF50104">
    <property type="entry name" value="Translation proteins SH3-like domain"/>
    <property type="match status" value="1"/>
</dbReference>
<accession>A1A072</accession>
<reference key="1">
    <citation type="submission" date="2006-12" db="EMBL/GenBank/DDBJ databases">
        <title>Bifidobacterium adolescentis complete genome sequence.</title>
        <authorList>
            <person name="Suzuki T."/>
            <person name="Tsuda Y."/>
            <person name="Kanou N."/>
            <person name="Inoue T."/>
            <person name="Kumazaki K."/>
            <person name="Nagano S."/>
            <person name="Hirai S."/>
            <person name="Tanaka K."/>
            <person name="Watanabe K."/>
        </authorList>
    </citation>
    <scope>NUCLEOTIDE SEQUENCE [LARGE SCALE GENOMIC DNA]</scope>
    <source>
        <strain>ATCC 15703 / DSM 20083 / NCTC 11814 / E194a</strain>
    </source>
</reference>
<sequence length="276" mass="30350">MAIRVYKPTTAGRRNASVSDFSELTRSTPEKSLVRKLSKTGGRNSYGRMTSRHRGGGHKRQYRLIDFKRWDKDGVPAKVAHIEYDPNRSARIALLHYADGEKRYIIAPEGIKQGDVIETGAQADIKPGNNLPLRNIPTGTVVHAIELRPLGGAKIARSAGAAVQLVAKDGAYAQLRMPSGEIRNVDARCRATVGEVGNSDHANIQLGKAGRARWMGKRPITRGESMNPVDHPHGGRTRGGKPPVSPWGKGEVRTRRPKKASNKMIVRRRPNGKNRK</sequence>
<feature type="chain" id="PRO_0000309874" description="Large ribosomal subunit protein uL2">
    <location>
        <begin position="1"/>
        <end position="276"/>
    </location>
</feature>
<feature type="region of interest" description="Disordered" evidence="2">
    <location>
        <begin position="35"/>
        <end position="58"/>
    </location>
</feature>
<feature type="region of interest" description="Disordered" evidence="2">
    <location>
        <begin position="218"/>
        <end position="276"/>
    </location>
</feature>
<feature type="compositionally biased region" description="Basic residues" evidence="2">
    <location>
        <begin position="255"/>
        <end position="276"/>
    </location>
</feature>